<feature type="chain" id="PRO_0000196906" description="Uncharacterized 39 kDa protein in mitochondrial S-1 and S-2 DNA">
    <location>
        <begin position="1"/>
        <end position="339"/>
    </location>
</feature>
<feature type="region of interest" description="Disordered" evidence="1">
    <location>
        <begin position="1"/>
        <end position="24"/>
    </location>
</feature>
<feature type="compositionally biased region" description="Polar residues" evidence="1">
    <location>
        <begin position="10"/>
        <end position="21"/>
    </location>
</feature>
<proteinExistence type="predicted"/>
<comment type="subcellular location">
    <subcellularLocation>
        <location evidence="2">Mitochondrion</location>
    </subcellularLocation>
</comment>
<comment type="miscellaneous">
    <text>The mitochondria from the S male-sterile cytoplasm of maize contain unique DNA-protein complexes, designated S-1 and S-2. These complexes consist of double-stranded linear DNAs with proteins covalently attached to the 5'-termini.</text>
</comment>
<dbReference type="EMBL" id="X02451">
    <property type="status" value="NOT_ANNOTATED_CDS"/>
    <property type="molecule type" value="Genomic_DNA"/>
</dbReference>
<dbReference type="PaxDb" id="4577-GRMZM5G833299_P01"/>
<dbReference type="MaizeGDB" id="69617"/>
<dbReference type="eggNOG" id="ENOG502R5EZ">
    <property type="taxonomic scope" value="Eukaryota"/>
</dbReference>
<dbReference type="GO" id="GO:0005739">
    <property type="term" value="C:mitochondrion"/>
    <property type="evidence" value="ECO:0007669"/>
    <property type="project" value="UniProtKB-SubCell"/>
</dbReference>
<accession>P10579</accession>
<organism>
    <name type="scientific">Zea mays</name>
    <name type="common">Maize</name>
    <dbReference type="NCBI Taxonomy" id="4577"/>
    <lineage>
        <taxon>Eukaryota</taxon>
        <taxon>Viridiplantae</taxon>
        <taxon>Streptophyta</taxon>
        <taxon>Embryophyta</taxon>
        <taxon>Tracheophyta</taxon>
        <taxon>Spermatophyta</taxon>
        <taxon>Magnoliopsida</taxon>
        <taxon>Liliopsida</taxon>
        <taxon>Poales</taxon>
        <taxon>Poaceae</taxon>
        <taxon>PACMAD clade</taxon>
        <taxon>Panicoideae</taxon>
        <taxon>Andropogonodae</taxon>
        <taxon>Andropogoneae</taxon>
        <taxon>Tripsacinae</taxon>
        <taxon>Zea</taxon>
    </lineage>
</organism>
<protein>
    <recommendedName>
        <fullName>Uncharacterized 39 kDa protein in mitochondrial S-1 and S-2 DNA</fullName>
    </recommendedName>
    <alternativeName>
        <fullName>URF 2</fullName>
    </alternativeName>
</protein>
<name>YMS2_MAIZE</name>
<keyword id="KW-0496">Mitochondrion</keyword>
<keyword id="KW-0614">Plasmid</keyword>
<geneLocation type="mitochondrion"/>
<geneLocation type="plasmid">
    <name>S-1</name>
</geneLocation>
<geneLocation type="plasmid">
    <name>S-2</name>
</geneLocation>
<evidence type="ECO:0000256" key="1">
    <source>
        <dbReference type="SAM" id="MobiDB-lite"/>
    </source>
</evidence>
<evidence type="ECO:0000305" key="2"/>
<sequence length="339" mass="39319">IQPARRHTKNTNMAKHTTKGTGHSMFISPRKIAHIPQINCEKQKLVLEVRSIYNDSWRVRGVLPFMINDFINQLNLTGKYRFGPVVYYQINIKEIPPLIYDVIRMEASKGYLWLDERNLDTHSLIGVYKCRVPMDLLVLKGLSNVILTTVNKAQPNISKFKDLKAMHYAFLNRQENVVKVVSIDLSDCMDYIPTSRILTSQKFTKQYGLYYNLVEWIIDLPIYDFHNHSFFPSTGITPIGEITHVILHNFYQNTVDSLLESWYPGITYSRYGHELFILCKQTDEFTIDDCDIDNILEVLDLYSVDINWSSDGLLMADNNDKALILHEDGSLEVWNSEDI</sequence>
<reference key="1">
    <citation type="journal article" date="1985" name="EMBO J.">
        <title>Nucleotide sequence of the S-1 mitochondrial DNA from the S cytoplasm of maize.</title>
        <authorList>
            <person name="Paillard M."/>
            <person name="Sederoff R.R."/>
            <person name="Levings C.S. III"/>
        </authorList>
    </citation>
    <scope>NUCLEOTIDE SEQUENCE [GENOMIC DNA]</scope>
    <source>
        <plasmid>S-1</plasmid>
    </source>
</reference>
<reference key="2">
    <citation type="journal article" date="1983" name="Proc. Natl. Acad. Sci. U.S.A.">
        <title>Nucleotide sequence of the S-2 mitochondrial DNA from the S cytoplasm of maize.</title>
        <authorList>
            <person name="Levings C.S. III"/>
            <person name="Sederoff R.R."/>
        </authorList>
    </citation>
    <scope>NUCLEOTIDE SEQUENCE [GENOMIC DNA]</scope>
    <source>
        <plasmid>S-2</plasmid>
    </source>
</reference>